<gene>
    <name type="primary">uppP</name>
    <name type="synonym">bacA</name>
    <name type="synonym">upk</name>
    <name type="ordered locus">EF_2439</name>
</gene>
<feature type="chain" id="PRO_0000151149" description="Undecaprenyl-diphosphatase">
    <location>
        <begin position="1"/>
        <end position="276"/>
    </location>
</feature>
<feature type="transmembrane region" description="Helical" evidence="2">
    <location>
        <begin position="45"/>
        <end position="65"/>
    </location>
</feature>
<feature type="transmembrane region" description="Helical" evidence="2">
    <location>
        <begin position="85"/>
        <end position="105"/>
    </location>
</feature>
<feature type="transmembrane region" description="Helical" evidence="2">
    <location>
        <begin position="113"/>
        <end position="133"/>
    </location>
</feature>
<feature type="transmembrane region" description="Helical" evidence="2">
    <location>
        <begin position="150"/>
        <end position="170"/>
    </location>
</feature>
<feature type="transmembrane region" description="Helical" evidence="2">
    <location>
        <begin position="188"/>
        <end position="208"/>
    </location>
</feature>
<feature type="transmembrane region" description="Helical" evidence="2">
    <location>
        <begin position="225"/>
        <end position="245"/>
    </location>
</feature>
<feature type="transmembrane region" description="Helical" evidence="2">
    <location>
        <begin position="255"/>
        <end position="275"/>
    </location>
</feature>
<comment type="function">
    <text evidence="1">Catalyzes the dephosphorylation of undecaprenyl diphosphate (UPP). Confers resistance to bacitracin (By similarity).</text>
</comment>
<comment type="catalytic activity">
    <reaction>
        <text>di-trans,octa-cis-undecaprenyl diphosphate + H2O = di-trans,octa-cis-undecaprenyl phosphate + phosphate + H(+)</text>
        <dbReference type="Rhea" id="RHEA:28094"/>
        <dbReference type="ChEBI" id="CHEBI:15377"/>
        <dbReference type="ChEBI" id="CHEBI:15378"/>
        <dbReference type="ChEBI" id="CHEBI:43474"/>
        <dbReference type="ChEBI" id="CHEBI:58405"/>
        <dbReference type="ChEBI" id="CHEBI:60392"/>
        <dbReference type="EC" id="3.6.1.27"/>
    </reaction>
</comment>
<comment type="subcellular location">
    <subcellularLocation>
        <location evidence="1">Cell membrane</location>
        <topology evidence="1">Multi-pass membrane protein</topology>
    </subcellularLocation>
</comment>
<comment type="miscellaneous">
    <text>Bacitracin is thought to be involved in the inhibition of peptidoglycan synthesis by sequestering undecaprenyl diphosphate, thereby reducing the pool of lipid carrier available.</text>
</comment>
<comment type="similarity">
    <text evidence="3">Belongs to the UppP family.</text>
</comment>
<keyword id="KW-0046">Antibiotic resistance</keyword>
<keyword id="KW-1003">Cell membrane</keyword>
<keyword id="KW-0133">Cell shape</keyword>
<keyword id="KW-0961">Cell wall biogenesis/degradation</keyword>
<keyword id="KW-0378">Hydrolase</keyword>
<keyword id="KW-0472">Membrane</keyword>
<keyword id="KW-0573">Peptidoglycan synthesis</keyword>
<keyword id="KW-1185">Reference proteome</keyword>
<keyword id="KW-0812">Transmembrane</keyword>
<keyword id="KW-1133">Transmembrane helix</keyword>
<evidence type="ECO:0000250" key="1"/>
<evidence type="ECO:0000255" key="2"/>
<evidence type="ECO:0000305" key="3"/>
<protein>
    <recommendedName>
        <fullName>Undecaprenyl-diphosphatase</fullName>
        <ecNumber>3.6.1.27</ecNumber>
    </recommendedName>
    <alternativeName>
        <fullName>Bacitracin resistance protein</fullName>
    </alternativeName>
    <alternativeName>
        <fullName>Undecaprenyl pyrophosphate phosphatase</fullName>
    </alternativeName>
</protein>
<accession>Q831R1</accession>
<sequence>MLFANLWKAIILGIIEGITEWLPISSTGHLILVDEFIKLDLSKDFMEMFNVVIQLGAIMAVVILYFHKLNPFSPKKNGEEKKDTWILWSKVLVACLPAAVIGLKFDDYLDAHFYNFLTVSIMLIVYGIAFIIIEKRNKNVAPKCTNLKDFTYKAALIVGAFQVLALIPGTSRSGATILGAILIGASRFVATEFSFFLGIPVMFGASFLKIFKFLAKGNTFGSEEIIILITGSIVAFVVSIIAIKFLLNYLKKNDFTVFGWYRVILGAILIGYWLFS</sequence>
<proteinExistence type="inferred from homology"/>
<organism>
    <name type="scientific">Enterococcus faecalis (strain ATCC 700802 / V583)</name>
    <dbReference type="NCBI Taxonomy" id="226185"/>
    <lineage>
        <taxon>Bacteria</taxon>
        <taxon>Bacillati</taxon>
        <taxon>Bacillota</taxon>
        <taxon>Bacilli</taxon>
        <taxon>Lactobacillales</taxon>
        <taxon>Enterococcaceae</taxon>
        <taxon>Enterococcus</taxon>
    </lineage>
</organism>
<name>UPPP1_ENTFA</name>
<dbReference type="EC" id="3.6.1.27"/>
<dbReference type="EMBL" id="AE016830">
    <property type="protein sequence ID" value="AAO82157.1"/>
    <property type="molecule type" value="Genomic_DNA"/>
</dbReference>
<dbReference type="RefSeq" id="NP_816087.1">
    <property type="nucleotide sequence ID" value="NC_004668.1"/>
</dbReference>
<dbReference type="RefSeq" id="WP_010706548.1">
    <property type="nucleotide sequence ID" value="NZ_KE136528.1"/>
</dbReference>
<dbReference type="SMR" id="Q831R1"/>
<dbReference type="STRING" id="226185.EF_2439"/>
<dbReference type="DNASU" id="1201305"/>
<dbReference type="EnsemblBacteria" id="AAO82157">
    <property type="protein sequence ID" value="AAO82157"/>
    <property type="gene ID" value="EF_2439"/>
</dbReference>
<dbReference type="KEGG" id="efa:EF2439"/>
<dbReference type="PATRIC" id="fig|226185.45.peg.1106"/>
<dbReference type="eggNOG" id="COG1968">
    <property type="taxonomic scope" value="Bacteria"/>
</dbReference>
<dbReference type="HOGENOM" id="CLU_060296_2_0_9"/>
<dbReference type="Proteomes" id="UP000001415">
    <property type="component" value="Chromosome"/>
</dbReference>
<dbReference type="GO" id="GO:0005886">
    <property type="term" value="C:plasma membrane"/>
    <property type="evidence" value="ECO:0007669"/>
    <property type="project" value="UniProtKB-SubCell"/>
</dbReference>
<dbReference type="GO" id="GO:0050380">
    <property type="term" value="F:undecaprenyl-diphosphatase activity"/>
    <property type="evidence" value="ECO:0007669"/>
    <property type="project" value="UniProtKB-UniRule"/>
</dbReference>
<dbReference type="GO" id="GO:0071555">
    <property type="term" value="P:cell wall organization"/>
    <property type="evidence" value="ECO:0007669"/>
    <property type="project" value="UniProtKB-KW"/>
</dbReference>
<dbReference type="GO" id="GO:0009252">
    <property type="term" value="P:peptidoglycan biosynthetic process"/>
    <property type="evidence" value="ECO:0007669"/>
    <property type="project" value="UniProtKB-KW"/>
</dbReference>
<dbReference type="GO" id="GO:0008360">
    <property type="term" value="P:regulation of cell shape"/>
    <property type="evidence" value="ECO:0007669"/>
    <property type="project" value="UniProtKB-KW"/>
</dbReference>
<dbReference type="GO" id="GO:0046677">
    <property type="term" value="P:response to antibiotic"/>
    <property type="evidence" value="ECO:0007669"/>
    <property type="project" value="UniProtKB-UniRule"/>
</dbReference>
<dbReference type="HAMAP" id="MF_01006">
    <property type="entry name" value="Undec_diphosphatase"/>
    <property type="match status" value="1"/>
</dbReference>
<dbReference type="InterPro" id="IPR003824">
    <property type="entry name" value="UppP"/>
</dbReference>
<dbReference type="NCBIfam" id="NF001389">
    <property type="entry name" value="PRK00281.1-2"/>
    <property type="match status" value="1"/>
</dbReference>
<dbReference type="NCBIfam" id="NF001390">
    <property type="entry name" value="PRK00281.1-4"/>
    <property type="match status" value="1"/>
</dbReference>
<dbReference type="NCBIfam" id="NF001391">
    <property type="entry name" value="PRK00281.1-5"/>
    <property type="match status" value="1"/>
</dbReference>
<dbReference type="NCBIfam" id="TIGR00753">
    <property type="entry name" value="undec_PP_bacA"/>
    <property type="match status" value="1"/>
</dbReference>
<dbReference type="PANTHER" id="PTHR30622">
    <property type="entry name" value="UNDECAPRENYL-DIPHOSPHATASE"/>
    <property type="match status" value="1"/>
</dbReference>
<dbReference type="PANTHER" id="PTHR30622:SF3">
    <property type="entry name" value="UNDECAPRENYL-DIPHOSPHATASE"/>
    <property type="match status" value="1"/>
</dbReference>
<dbReference type="Pfam" id="PF02673">
    <property type="entry name" value="BacA"/>
    <property type="match status" value="1"/>
</dbReference>
<reference key="1">
    <citation type="journal article" date="2003" name="Science">
        <title>Role of mobile DNA in the evolution of vancomycin-resistant Enterococcus faecalis.</title>
        <authorList>
            <person name="Paulsen I.T."/>
            <person name="Banerjei L."/>
            <person name="Myers G.S.A."/>
            <person name="Nelson K.E."/>
            <person name="Seshadri R."/>
            <person name="Read T.D."/>
            <person name="Fouts D.E."/>
            <person name="Eisen J.A."/>
            <person name="Gill S.R."/>
            <person name="Heidelberg J.F."/>
            <person name="Tettelin H."/>
            <person name="Dodson R.J."/>
            <person name="Umayam L.A."/>
            <person name="Brinkac L.M."/>
            <person name="Beanan M.J."/>
            <person name="Daugherty S.C."/>
            <person name="DeBoy R.T."/>
            <person name="Durkin S.A."/>
            <person name="Kolonay J.F."/>
            <person name="Madupu R."/>
            <person name="Nelson W.C."/>
            <person name="Vamathevan J.J."/>
            <person name="Tran B."/>
            <person name="Upton J."/>
            <person name="Hansen T."/>
            <person name="Shetty J."/>
            <person name="Khouri H.M."/>
            <person name="Utterback T.R."/>
            <person name="Radune D."/>
            <person name="Ketchum K.A."/>
            <person name="Dougherty B.A."/>
            <person name="Fraser C.M."/>
        </authorList>
    </citation>
    <scope>NUCLEOTIDE SEQUENCE [LARGE SCALE GENOMIC DNA]</scope>
    <source>
        <strain>ATCC 700802 / V583</strain>
    </source>
</reference>